<sequence length="261" mass="28184">MSQSLHLTTRGSVLEIILDRPKANAIDAKTSHEMGEVFMRFRDDPSLRVAIITGAGERFFCAGWDLKAAAEGEAPDADFGAGGFAGLTELFDLNKPVIAAINGYAFGGGFELALAADMIICSDNASFALPEAQLGIVPDSGGVLRLPKRLPPAIVNEMLMTGRRMNAQEALRWGIANRVVSATELMDSARELADQIANSAPLAVAALKEIYRATSELSIEEGYKLMRSGVLKYYPRVLHSEDALEGPLAFAEKRSPEWKGR</sequence>
<protein>
    <recommendedName>
        <fullName evidence="1">Carnitinyl-CoA dehydratase</fullName>
        <ecNumber evidence="1">4.2.1.149</ecNumber>
    </recommendedName>
    <alternativeName>
        <fullName evidence="1">Crotonobetainyl-CoA hydratase</fullName>
    </alternativeName>
</protein>
<feature type="initiator methionine" description="Removed" evidence="2">
    <location>
        <position position="1"/>
    </location>
</feature>
<feature type="chain" id="PRO_0000109351" description="Carnitinyl-CoA dehydratase">
    <location>
        <begin position="2"/>
        <end position="261"/>
    </location>
</feature>
<feature type="active site" description="Nucleophile" evidence="1">
    <location>
        <position position="111"/>
    </location>
</feature>
<feature type="active site" description="Proton acceptor" evidence="1">
    <location>
        <position position="131"/>
    </location>
</feature>
<gene>
    <name evidence="1" type="primary">caiD</name>
</gene>
<evidence type="ECO:0000255" key="1">
    <source>
        <dbReference type="HAMAP-Rule" id="MF_01051"/>
    </source>
</evidence>
<evidence type="ECO:0000269" key="2">
    <source>
    </source>
</evidence>
<evidence type="ECO:0000305" key="3"/>
<evidence type="ECO:0000305" key="4">
    <source>
    </source>
</evidence>
<organism>
    <name type="scientific">Proteus sp. (strain LE138)</name>
    <dbReference type="NCBI Taxonomy" id="217617"/>
    <lineage>
        <taxon>Bacteria</taxon>
        <taxon>Pseudomonadati</taxon>
        <taxon>Pseudomonadota</taxon>
        <taxon>Gammaproteobacteria</taxon>
        <taxon>Enterobacterales</taxon>
        <taxon>Morganellaceae</taxon>
        <taxon>Proteus</taxon>
    </lineage>
</organism>
<keyword id="KW-0903">Direct protein sequencing</keyword>
<keyword id="KW-0456">Lyase</keyword>
<reference key="1">
    <citation type="submission" date="2002-09" db="EMBL/GenBank/DDBJ databases">
        <title>Cai locus and corresponding enzymes of Proteus sp.</title>
        <authorList>
            <person name="Engemann C."/>
            <person name="Elssner T."/>
            <person name="Pfeifer S."/>
            <person name="Krumbholz C."/>
            <person name="Maier T."/>
            <person name="Kleber H.-P."/>
        </authorList>
    </citation>
    <scope>NUCLEOTIDE SEQUENCE [GENOMIC DNA]</scope>
</reference>
<reference key="2">
    <citation type="journal article" date="2001" name="Arch. Microbiol.">
        <title>Biotransformation of crotonobetaine to L(-)-carnitine in Proteus sp.</title>
        <authorList>
            <person name="Engemann C."/>
            <person name="Elssner T."/>
            <person name="Kleber H.-P."/>
        </authorList>
    </citation>
    <scope>PROTEIN SEQUENCE OF 2-21</scope>
    <scope>SUBUNIT</scope>
</reference>
<accession>Q8GB17</accession>
<proteinExistence type="evidence at protein level"/>
<name>CAID_PROSL</name>
<comment type="function">
    <text evidence="1">Catalyzes the reversible dehydration of L-carnitinyl-CoA to crotonobetainyl-CoA.</text>
</comment>
<comment type="catalytic activity">
    <reaction evidence="1">
        <text>(R)-carnitinyl-CoA = crotonobetainyl-CoA + H2O</text>
        <dbReference type="Rhea" id="RHEA:28338"/>
        <dbReference type="ChEBI" id="CHEBI:15377"/>
        <dbReference type="ChEBI" id="CHEBI:60932"/>
        <dbReference type="ChEBI" id="CHEBI:60933"/>
        <dbReference type="EC" id="4.2.1.149"/>
    </reaction>
</comment>
<comment type="pathway">
    <text evidence="1">Amine and polyamine metabolism; carnitine metabolism.</text>
</comment>
<comment type="subunit">
    <text evidence="4">Homotrimer.</text>
</comment>
<comment type="similarity">
    <text evidence="1 3">Belongs to the enoyl-CoA hydratase/isomerase family.</text>
</comment>
<dbReference type="EC" id="4.2.1.149" evidence="1"/>
<dbReference type="EMBL" id="AJ508908">
    <property type="protein sequence ID" value="CAD48582.1"/>
    <property type="molecule type" value="Genomic_DNA"/>
</dbReference>
<dbReference type="SMR" id="Q8GB17"/>
<dbReference type="KEGG" id="ag:CAD48582"/>
<dbReference type="BRENDA" id="4.2.1.149">
    <property type="organism ID" value="5048"/>
</dbReference>
<dbReference type="UniPathway" id="UPA00117"/>
<dbReference type="GO" id="GO:0016836">
    <property type="term" value="F:hydro-lyase activity"/>
    <property type="evidence" value="ECO:0007669"/>
    <property type="project" value="UniProtKB-UniRule"/>
</dbReference>
<dbReference type="GO" id="GO:0008735">
    <property type="term" value="F:L-carnitine CoA-transferase activity"/>
    <property type="evidence" value="ECO:0007669"/>
    <property type="project" value="RHEA"/>
</dbReference>
<dbReference type="GO" id="GO:0009437">
    <property type="term" value="P:carnitine metabolic process"/>
    <property type="evidence" value="ECO:0007669"/>
    <property type="project" value="UniProtKB-UniRule"/>
</dbReference>
<dbReference type="GO" id="GO:0006635">
    <property type="term" value="P:fatty acid beta-oxidation"/>
    <property type="evidence" value="ECO:0007669"/>
    <property type="project" value="TreeGrafter"/>
</dbReference>
<dbReference type="CDD" id="cd06558">
    <property type="entry name" value="crotonase-like"/>
    <property type="match status" value="1"/>
</dbReference>
<dbReference type="FunFam" id="1.10.12.10:FF:000005">
    <property type="entry name" value="Carnitinyl-CoA dehydratase"/>
    <property type="match status" value="1"/>
</dbReference>
<dbReference type="FunFam" id="3.90.226.10:FF:000009">
    <property type="entry name" value="Carnitinyl-CoA dehydratase"/>
    <property type="match status" value="1"/>
</dbReference>
<dbReference type="Gene3D" id="3.90.226.10">
    <property type="entry name" value="2-enoyl-CoA Hydratase, Chain A, domain 1"/>
    <property type="match status" value="1"/>
</dbReference>
<dbReference type="Gene3D" id="1.10.12.10">
    <property type="entry name" value="Lyase 2-enoyl-coa Hydratase, Chain A, domain 2"/>
    <property type="match status" value="1"/>
</dbReference>
<dbReference type="HAMAP" id="MF_01051">
    <property type="entry name" value="CaiD"/>
    <property type="match status" value="1"/>
</dbReference>
<dbReference type="InterPro" id="IPR022852">
    <property type="entry name" value="Carnitinyl_CoA_dehydratase"/>
</dbReference>
<dbReference type="InterPro" id="IPR029045">
    <property type="entry name" value="ClpP/crotonase-like_dom_sf"/>
</dbReference>
<dbReference type="InterPro" id="IPR018376">
    <property type="entry name" value="Enoyl-CoA_hyd/isom_CS"/>
</dbReference>
<dbReference type="InterPro" id="IPR001753">
    <property type="entry name" value="Enoyl-CoA_hydra/iso"/>
</dbReference>
<dbReference type="InterPro" id="IPR014748">
    <property type="entry name" value="Enoyl-CoA_hydra_C"/>
</dbReference>
<dbReference type="NCBIfam" id="NF002936">
    <property type="entry name" value="PRK03580.1"/>
    <property type="match status" value="1"/>
</dbReference>
<dbReference type="PANTHER" id="PTHR11941:SF54">
    <property type="entry name" value="ENOYL-COA HYDRATASE, MITOCHONDRIAL"/>
    <property type="match status" value="1"/>
</dbReference>
<dbReference type="PANTHER" id="PTHR11941">
    <property type="entry name" value="ENOYL-COA HYDRATASE-RELATED"/>
    <property type="match status" value="1"/>
</dbReference>
<dbReference type="Pfam" id="PF00378">
    <property type="entry name" value="ECH_1"/>
    <property type="match status" value="1"/>
</dbReference>
<dbReference type="SUPFAM" id="SSF52096">
    <property type="entry name" value="ClpP/crotonase"/>
    <property type="match status" value="1"/>
</dbReference>
<dbReference type="PROSITE" id="PS00166">
    <property type="entry name" value="ENOYL_COA_HYDRATASE"/>
    <property type="match status" value="1"/>
</dbReference>